<dbReference type="EC" id="2.6.1.52" evidence="1"/>
<dbReference type="EMBL" id="AM933173">
    <property type="protein sequence ID" value="CAR36809.1"/>
    <property type="molecule type" value="Genomic_DNA"/>
</dbReference>
<dbReference type="RefSeq" id="WP_000079590.1">
    <property type="nucleotide sequence ID" value="NC_011274.1"/>
</dbReference>
<dbReference type="SMR" id="B5R8J4"/>
<dbReference type="KEGG" id="seg:SG0919"/>
<dbReference type="HOGENOM" id="CLU_034866_0_2_6"/>
<dbReference type="UniPathway" id="UPA00135">
    <property type="reaction ID" value="UER00197"/>
</dbReference>
<dbReference type="UniPathway" id="UPA00244">
    <property type="reaction ID" value="UER00311"/>
</dbReference>
<dbReference type="Proteomes" id="UP000008321">
    <property type="component" value="Chromosome"/>
</dbReference>
<dbReference type="GO" id="GO:0005737">
    <property type="term" value="C:cytoplasm"/>
    <property type="evidence" value="ECO:0007669"/>
    <property type="project" value="UniProtKB-SubCell"/>
</dbReference>
<dbReference type="GO" id="GO:0004648">
    <property type="term" value="F:O-phospho-L-serine:2-oxoglutarate aminotransferase activity"/>
    <property type="evidence" value="ECO:0007669"/>
    <property type="project" value="UniProtKB-UniRule"/>
</dbReference>
<dbReference type="GO" id="GO:0030170">
    <property type="term" value="F:pyridoxal phosphate binding"/>
    <property type="evidence" value="ECO:0007669"/>
    <property type="project" value="UniProtKB-UniRule"/>
</dbReference>
<dbReference type="GO" id="GO:0006564">
    <property type="term" value="P:L-serine biosynthetic process"/>
    <property type="evidence" value="ECO:0007669"/>
    <property type="project" value="UniProtKB-UniRule"/>
</dbReference>
<dbReference type="GO" id="GO:0008615">
    <property type="term" value="P:pyridoxine biosynthetic process"/>
    <property type="evidence" value="ECO:0007669"/>
    <property type="project" value="UniProtKB-UniRule"/>
</dbReference>
<dbReference type="CDD" id="cd00611">
    <property type="entry name" value="PSAT_like"/>
    <property type="match status" value="1"/>
</dbReference>
<dbReference type="FunFam" id="3.40.640.10:FF:000010">
    <property type="entry name" value="Phosphoserine aminotransferase"/>
    <property type="match status" value="1"/>
</dbReference>
<dbReference type="FunFam" id="3.90.1150.10:FF:000006">
    <property type="entry name" value="Phosphoserine aminotransferase"/>
    <property type="match status" value="1"/>
</dbReference>
<dbReference type="Gene3D" id="3.90.1150.10">
    <property type="entry name" value="Aspartate Aminotransferase, domain 1"/>
    <property type="match status" value="1"/>
</dbReference>
<dbReference type="Gene3D" id="3.40.640.10">
    <property type="entry name" value="Type I PLP-dependent aspartate aminotransferase-like (Major domain)"/>
    <property type="match status" value="1"/>
</dbReference>
<dbReference type="HAMAP" id="MF_00160">
    <property type="entry name" value="SerC_aminotrans_5"/>
    <property type="match status" value="1"/>
</dbReference>
<dbReference type="InterPro" id="IPR000192">
    <property type="entry name" value="Aminotrans_V_dom"/>
</dbReference>
<dbReference type="InterPro" id="IPR020578">
    <property type="entry name" value="Aminotrans_V_PyrdxlP_BS"/>
</dbReference>
<dbReference type="InterPro" id="IPR022278">
    <property type="entry name" value="Pser_aminoTfrase"/>
</dbReference>
<dbReference type="InterPro" id="IPR015424">
    <property type="entry name" value="PyrdxlP-dep_Trfase"/>
</dbReference>
<dbReference type="InterPro" id="IPR015421">
    <property type="entry name" value="PyrdxlP-dep_Trfase_major"/>
</dbReference>
<dbReference type="InterPro" id="IPR015422">
    <property type="entry name" value="PyrdxlP-dep_Trfase_small"/>
</dbReference>
<dbReference type="NCBIfam" id="NF003764">
    <property type="entry name" value="PRK05355.1"/>
    <property type="match status" value="1"/>
</dbReference>
<dbReference type="NCBIfam" id="TIGR01364">
    <property type="entry name" value="serC_1"/>
    <property type="match status" value="1"/>
</dbReference>
<dbReference type="PANTHER" id="PTHR43247">
    <property type="entry name" value="PHOSPHOSERINE AMINOTRANSFERASE"/>
    <property type="match status" value="1"/>
</dbReference>
<dbReference type="PANTHER" id="PTHR43247:SF1">
    <property type="entry name" value="PHOSPHOSERINE AMINOTRANSFERASE"/>
    <property type="match status" value="1"/>
</dbReference>
<dbReference type="Pfam" id="PF00266">
    <property type="entry name" value="Aminotran_5"/>
    <property type="match status" value="1"/>
</dbReference>
<dbReference type="PIRSF" id="PIRSF000525">
    <property type="entry name" value="SerC"/>
    <property type="match status" value="1"/>
</dbReference>
<dbReference type="SUPFAM" id="SSF53383">
    <property type="entry name" value="PLP-dependent transferases"/>
    <property type="match status" value="1"/>
</dbReference>
<dbReference type="PROSITE" id="PS00595">
    <property type="entry name" value="AA_TRANSFER_CLASS_5"/>
    <property type="match status" value="1"/>
</dbReference>
<feature type="chain" id="PRO_1000203554" description="Phosphoserine aminotransferase">
    <location>
        <begin position="1"/>
        <end position="362"/>
    </location>
</feature>
<feature type="binding site" evidence="1">
    <location>
        <position position="9"/>
    </location>
    <ligand>
        <name>L-glutamate</name>
        <dbReference type="ChEBI" id="CHEBI:29985"/>
    </ligand>
</feature>
<feature type="binding site" evidence="1">
    <location>
        <position position="42"/>
    </location>
    <ligand>
        <name>L-glutamate</name>
        <dbReference type="ChEBI" id="CHEBI:29985"/>
    </ligand>
</feature>
<feature type="binding site" evidence="1">
    <location>
        <begin position="76"/>
        <end position="77"/>
    </location>
    <ligand>
        <name>pyridoxal 5'-phosphate</name>
        <dbReference type="ChEBI" id="CHEBI:597326"/>
    </ligand>
</feature>
<feature type="binding site" evidence="1">
    <location>
        <position position="102"/>
    </location>
    <ligand>
        <name>pyridoxal 5'-phosphate</name>
        <dbReference type="ChEBI" id="CHEBI:597326"/>
    </ligand>
</feature>
<feature type="binding site" evidence="1">
    <location>
        <position position="153"/>
    </location>
    <ligand>
        <name>pyridoxal 5'-phosphate</name>
        <dbReference type="ChEBI" id="CHEBI:597326"/>
    </ligand>
</feature>
<feature type="binding site" evidence="1">
    <location>
        <position position="174"/>
    </location>
    <ligand>
        <name>pyridoxal 5'-phosphate</name>
        <dbReference type="ChEBI" id="CHEBI:597326"/>
    </ligand>
</feature>
<feature type="binding site" evidence="1">
    <location>
        <position position="197"/>
    </location>
    <ligand>
        <name>pyridoxal 5'-phosphate</name>
        <dbReference type="ChEBI" id="CHEBI:597326"/>
    </ligand>
</feature>
<feature type="binding site" evidence="1">
    <location>
        <begin position="239"/>
        <end position="240"/>
    </location>
    <ligand>
        <name>pyridoxal 5'-phosphate</name>
        <dbReference type="ChEBI" id="CHEBI:597326"/>
    </ligand>
</feature>
<feature type="modified residue" description="N6-(pyridoxal phosphate)lysine" evidence="1">
    <location>
        <position position="198"/>
    </location>
</feature>
<accession>B5R8J4</accession>
<organism>
    <name type="scientific">Salmonella gallinarum (strain 287/91 / NCTC 13346)</name>
    <dbReference type="NCBI Taxonomy" id="550538"/>
    <lineage>
        <taxon>Bacteria</taxon>
        <taxon>Pseudomonadati</taxon>
        <taxon>Pseudomonadota</taxon>
        <taxon>Gammaproteobacteria</taxon>
        <taxon>Enterobacterales</taxon>
        <taxon>Enterobacteriaceae</taxon>
        <taxon>Salmonella</taxon>
    </lineage>
</organism>
<evidence type="ECO:0000255" key="1">
    <source>
        <dbReference type="HAMAP-Rule" id="MF_00160"/>
    </source>
</evidence>
<protein>
    <recommendedName>
        <fullName evidence="1">Phosphoserine aminotransferase</fullName>
        <ecNumber evidence="1">2.6.1.52</ecNumber>
    </recommendedName>
    <alternativeName>
        <fullName evidence="1">Phosphohydroxythreonine aminotransferase</fullName>
        <shortName evidence="1">PSAT</shortName>
    </alternativeName>
</protein>
<comment type="function">
    <text evidence="1">Catalyzes the reversible conversion of 3-phosphohydroxypyruvate to phosphoserine and of 3-hydroxy-2-oxo-4-phosphonooxybutanoate to phosphohydroxythreonine.</text>
</comment>
<comment type="catalytic activity">
    <reaction evidence="1">
        <text>O-phospho-L-serine + 2-oxoglutarate = 3-phosphooxypyruvate + L-glutamate</text>
        <dbReference type="Rhea" id="RHEA:14329"/>
        <dbReference type="ChEBI" id="CHEBI:16810"/>
        <dbReference type="ChEBI" id="CHEBI:18110"/>
        <dbReference type="ChEBI" id="CHEBI:29985"/>
        <dbReference type="ChEBI" id="CHEBI:57524"/>
        <dbReference type="EC" id="2.6.1.52"/>
    </reaction>
</comment>
<comment type="catalytic activity">
    <reaction evidence="1">
        <text>4-(phosphooxy)-L-threonine + 2-oxoglutarate = (R)-3-hydroxy-2-oxo-4-phosphooxybutanoate + L-glutamate</text>
        <dbReference type="Rhea" id="RHEA:16573"/>
        <dbReference type="ChEBI" id="CHEBI:16810"/>
        <dbReference type="ChEBI" id="CHEBI:29985"/>
        <dbReference type="ChEBI" id="CHEBI:58452"/>
        <dbReference type="ChEBI" id="CHEBI:58538"/>
        <dbReference type="EC" id="2.6.1.52"/>
    </reaction>
</comment>
<comment type="cofactor">
    <cofactor evidence="1">
        <name>pyridoxal 5'-phosphate</name>
        <dbReference type="ChEBI" id="CHEBI:597326"/>
    </cofactor>
    <text evidence="1">Binds 1 pyridoxal phosphate per subunit.</text>
</comment>
<comment type="pathway">
    <text evidence="1">Amino-acid biosynthesis; L-serine biosynthesis; L-serine from 3-phospho-D-glycerate: step 2/3.</text>
</comment>
<comment type="pathway">
    <text evidence="1">Cofactor biosynthesis; pyridoxine 5'-phosphate biosynthesis; pyridoxine 5'-phosphate from D-erythrose 4-phosphate: step 3/5.</text>
</comment>
<comment type="subunit">
    <text evidence="1">Homodimer.</text>
</comment>
<comment type="subcellular location">
    <subcellularLocation>
        <location evidence="1">Cytoplasm</location>
    </subcellularLocation>
</comment>
<comment type="similarity">
    <text evidence="1">Belongs to the class-V pyridoxal-phosphate-dependent aminotransferase family. SerC subfamily.</text>
</comment>
<name>SERC_SALG2</name>
<proteinExistence type="inferred from homology"/>
<keyword id="KW-0028">Amino-acid biosynthesis</keyword>
<keyword id="KW-0032">Aminotransferase</keyword>
<keyword id="KW-0963">Cytoplasm</keyword>
<keyword id="KW-0663">Pyridoxal phosphate</keyword>
<keyword id="KW-0664">Pyridoxine biosynthesis</keyword>
<keyword id="KW-0718">Serine biosynthesis</keyword>
<keyword id="KW-0808">Transferase</keyword>
<sequence>MAQVFNFSSGPAMLPAEVLKLAQQELRDWHGLGTSVMEISHRGKEFIQVAEEAEQDFRDLLNIPSNYKVLFCHGGGRGQFAGVPLNLLGDKTTADYVDAGYWAASAIKEAKKYCAPQIIDAKITVDGKRAVKPMREWQLSDNAAYLHYCPNETIDGIAIDETPDFGPEVVVTADFSSTILSAPLDVSRYGVIYAGAQKNIGPAGLTLVIVREDLLGKAHESCPSILDYTVLNDNDSMFNTPPTFAWYLSGLVFKWLKAQGGVAAMHKINQQKAELLYGVIDNSDFYRNDVAQANRSRMNVPFQLADNALDKVFLEESFAAGLHALKGHRVVGGMRASIYNAMPIEGVKALTDFMIDFERRHG</sequence>
<reference key="1">
    <citation type="journal article" date="2008" name="Genome Res.">
        <title>Comparative genome analysis of Salmonella enteritidis PT4 and Salmonella gallinarum 287/91 provides insights into evolutionary and host adaptation pathways.</title>
        <authorList>
            <person name="Thomson N.R."/>
            <person name="Clayton D.J."/>
            <person name="Windhorst D."/>
            <person name="Vernikos G."/>
            <person name="Davidson S."/>
            <person name="Churcher C."/>
            <person name="Quail M.A."/>
            <person name="Stevens M."/>
            <person name="Jones M.A."/>
            <person name="Watson M."/>
            <person name="Barron A."/>
            <person name="Layton A."/>
            <person name="Pickard D."/>
            <person name="Kingsley R.A."/>
            <person name="Bignell A."/>
            <person name="Clark L."/>
            <person name="Harris B."/>
            <person name="Ormond D."/>
            <person name="Abdellah Z."/>
            <person name="Brooks K."/>
            <person name="Cherevach I."/>
            <person name="Chillingworth T."/>
            <person name="Woodward J."/>
            <person name="Norberczak H."/>
            <person name="Lord A."/>
            <person name="Arrowsmith C."/>
            <person name="Jagels K."/>
            <person name="Moule S."/>
            <person name="Mungall K."/>
            <person name="Saunders M."/>
            <person name="Whitehead S."/>
            <person name="Chabalgoity J.A."/>
            <person name="Maskell D."/>
            <person name="Humphreys T."/>
            <person name="Roberts M."/>
            <person name="Barrow P.A."/>
            <person name="Dougan G."/>
            <person name="Parkhill J."/>
        </authorList>
    </citation>
    <scope>NUCLEOTIDE SEQUENCE [LARGE SCALE GENOMIC DNA]</scope>
    <source>
        <strain>287/91 / NCTC 13346</strain>
    </source>
</reference>
<gene>
    <name evidence="1" type="primary">serC</name>
    <name type="ordered locus">SG0919</name>
</gene>